<organism>
    <name type="scientific">Lactiplantibacillus plantarum (strain ATCC BAA-793 / NCIMB 8826 / WCFS1)</name>
    <name type="common">Lactobacillus plantarum</name>
    <dbReference type="NCBI Taxonomy" id="220668"/>
    <lineage>
        <taxon>Bacteria</taxon>
        <taxon>Bacillati</taxon>
        <taxon>Bacillota</taxon>
        <taxon>Bacilli</taxon>
        <taxon>Lactobacillales</taxon>
        <taxon>Lactobacillaceae</taxon>
        <taxon>Lactiplantibacillus</taxon>
    </lineage>
</organism>
<name>HIS4_LACPL</name>
<accession>Q88UE2</accession>
<accession>F9UR72</accession>
<reference key="1">
    <citation type="journal article" date="2003" name="Proc. Natl. Acad. Sci. U.S.A.">
        <title>Complete genome sequence of Lactobacillus plantarum WCFS1.</title>
        <authorList>
            <person name="Kleerebezem M."/>
            <person name="Boekhorst J."/>
            <person name="van Kranenburg R."/>
            <person name="Molenaar D."/>
            <person name="Kuipers O.P."/>
            <person name="Leer R."/>
            <person name="Tarchini R."/>
            <person name="Peters S.A."/>
            <person name="Sandbrink H.M."/>
            <person name="Fiers M.W.E.J."/>
            <person name="Stiekema W."/>
            <person name="Klein Lankhorst R.M."/>
            <person name="Bron P.A."/>
            <person name="Hoffer S.M."/>
            <person name="Nierop Groot M.N."/>
            <person name="Kerkhoven R."/>
            <person name="De Vries M."/>
            <person name="Ursing B."/>
            <person name="De Vos W.M."/>
            <person name="Siezen R.J."/>
        </authorList>
    </citation>
    <scope>NUCLEOTIDE SEQUENCE [LARGE SCALE GENOMIC DNA]</scope>
    <source>
        <strain>ATCC BAA-793 / NCIMB 8826 / WCFS1</strain>
    </source>
</reference>
<reference key="2">
    <citation type="journal article" date="2012" name="J. Bacteriol.">
        <title>Complete resequencing and reannotation of the Lactobacillus plantarum WCFS1 genome.</title>
        <authorList>
            <person name="Siezen R.J."/>
            <person name="Francke C."/>
            <person name="Renckens B."/>
            <person name="Boekhorst J."/>
            <person name="Wels M."/>
            <person name="Kleerebezem M."/>
            <person name="van Hijum S.A."/>
        </authorList>
    </citation>
    <scope>NUCLEOTIDE SEQUENCE [LARGE SCALE GENOMIC DNA]</scope>
    <scope>GENOME REANNOTATION</scope>
    <source>
        <strain>ATCC BAA-793 / NCIMB 8826 / WCFS1</strain>
    </source>
</reference>
<comment type="catalytic activity">
    <reaction evidence="1">
        <text>1-(5-phospho-beta-D-ribosyl)-5-[(5-phospho-beta-D-ribosylamino)methylideneamino]imidazole-4-carboxamide = 5-[(5-phospho-1-deoxy-D-ribulos-1-ylimino)methylamino]-1-(5-phospho-beta-D-ribosyl)imidazole-4-carboxamide</text>
        <dbReference type="Rhea" id="RHEA:15469"/>
        <dbReference type="ChEBI" id="CHEBI:58435"/>
        <dbReference type="ChEBI" id="CHEBI:58525"/>
        <dbReference type="EC" id="5.3.1.16"/>
    </reaction>
</comment>
<comment type="pathway">
    <text evidence="1">Amino-acid biosynthesis; L-histidine biosynthesis; L-histidine from 5-phospho-alpha-D-ribose 1-diphosphate: step 4/9.</text>
</comment>
<comment type="subcellular location">
    <subcellularLocation>
        <location evidence="1">Cytoplasm</location>
    </subcellularLocation>
</comment>
<comment type="similarity">
    <text evidence="1">Belongs to the HisA/HisF family.</text>
</comment>
<feature type="chain" id="PRO_0000142013" description="1-(5-phosphoribosyl)-5-[(5-phosphoribosylamino)methylideneamino] imidazole-4-carboxamide isomerase">
    <location>
        <begin position="1"/>
        <end position="239"/>
    </location>
</feature>
<feature type="active site" description="Proton acceptor" evidence="1">
    <location>
        <position position="7"/>
    </location>
</feature>
<feature type="active site" description="Proton donor" evidence="1">
    <location>
        <position position="129"/>
    </location>
</feature>
<evidence type="ECO:0000255" key="1">
    <source>
        <dbReference type="HAMAP-Rule" id="MF_01014"/>
    </source>
</evidence>
<protein>
    <recommendedName>
        <fullName evidence="1">1-(5-phosphoribosyl)-5-[(5-phosphoribosylamino)methylideneamino] imidazole-4-carboxamide isomerase</fullName>
        <ecNumber evidence="1">5.3.1.16</ecNumber>
    </recommendedName>
    <alternativeName>
        <fullName evidence="1">Phosphoribosylformimino-5-aminoimidazole carboxamide ribotide isomerase</fullName>
    </alternativeName>
</protein>
<gene>
    <name evidence="1" type="primary">hisA</name>
    <name type="ordered locus">lp_2556</name>
</gene>
<proteinExistence type="inferred from homology"/>
<sequence>MIFPAIDLRAGQSVRLYQGDFKQATLINPDPVVQAQQINAAGLQQLHMVDLDGAKSGRPENFATITAIRQAFTGTIELGGGIRTYELATRYLELGIDRLILGSVALTDPRLVKRLLSEFGGERIVIGLDGTNGYVAIKGWLEQSQTKMSTLMKTMTTSGAKHFIVTDVARDGTMQGPNLALYQELQAQVPTANLIASGGVRNLTDVQVLQASGFKDVIIGKALAEGGVTLAELAGVTEC</sequence>
<dbReference type="EC" id="5.3.1.16" evidence="1"/>
<dbReference type="EMBL" id="AL935263">
    <property type="protein sequence ID" value="CCC79711.1"/>
    <property type="molecule type" value="Genomic_DNA"/>
</dbReference>
<dbReference type="RefSeq" id="WP_003642716.1">
    <property type="nucleotide sequence ID" value="NC_004567.2"/>
</dbReference>
<dbReference type="RefSeq" id="YP_004890225.1">
    <property type="nucleotide sequence ID" value="NC_004567.2"/>
</dbReference>
<dbReference type="SMR" id="Q88UE2"/>
<dbReference type="STRING" id="220668.lp_2556"/>
<dbReference type="EnsemblBacteria" id="CCC79711">
    <property type="protein sequence ID" value="CCC79711"/>
    <property type="gene ID" value="lp_2556"/>
</dbReference>
<dbReference type="GeneID" id="89669838"/>
<dbReference type="KEGG" id="lpl:lp_2556"/>
<dbReference type="PATRIC" id="fig|220668.9.peg.2147"/>
<dbReference type="eggNOG" id="COG0106">
    <property type="taxonomic scope" value="Bacteria"/>
</dbReference>
<dbReference type="HOGENOM" id="CLU_048577_1_2_9"/>
<dbReference type="OrthoDB" id="9807749at2"/>
<dbReference type="PhylomeDB" id="Q88UE2"/>
<dbReference type="UniPathway" id="UPA00031">
    <property type="reaction ID" value="UER00009"/>
</dbReference>
<dbReference type="Proteomes" id="UP000000432">
    <property type="component" value="Chromosome"/>
</dbReference>
<dbReference type="GO" id="GO:0005737">
    <property type="term" value="C:cytoplasm"/>
    <property type="evidence" value="ECO:0007669"/>
    <property type="project" value="UniProtKB-SubCell"/>
</dbReference>
<dbReference type="GO" id="GO:0003949">
    <property type="term" value="F:1-(5-phosphoribosyl)-5-[(5-phosphoribosylamino)methylideneamino]imidazole-4-carboxamide isomerase activity"/>
    <property type="evidence" value="ECO:0007669"/>
    <property type="project" value="UniProtKB-UniRule"/>
</dbReference>
<dbReference type="GO" id="GO:0000105">
    <property type="term" value="P:L-histidine biosynthetic process"/>
    <property type="evidence" value="ECO:0007669"/>
    <property type="project" value="UniProtKB-UniRule"/>
</dbReference>
<dbReference type="GO" id="GO:0000162">
    <property type="term" value="P:L-tryptophan biosynthetic process"/>
    <property type="evidence" value="ECO:0007669"/>
    <property type="project" value="TreeGrafter"/>
</dbReference>
<dbReference type="CDD" id="cd04732">
    <property type="entry name" value="HisA"/>
    <property type="match status" value="1"/>
</dbReference>
<dbReference type="FunFam" id="3.20.20.70:FF:000009">
    <property type="entry name" value="1-(5-phosphoribosyl)-5-[(5-phosphoribosylamino)methylideneamino] imidazole-4-carboxamide isomerase"/>
    <property type="match status" value="1"/>
</dbReference>
<dbReference type="Gene3D" id="3.20.20.70">
    <property type="entry name" value="Aldolase class I"/>
    <property type="match status" value="1"/>
</dbReference>
<dbReference type="HAMAP" id="MF_01014">
    <property type="entry name" value="HisA"/>
    <property type="match status" value="1"/>
</dbReference>
<dbReference type="InterPro" id="IPR013785">
    <property type="entry name" value="Aldolase_TIM"/>
</dbReference>
<dbReference type="InterPro" id="IPR006062">
    <property type="entry name" value="His_biosynth"/>
</dbReference>
<dbReference type="InterPro" id="IPR006063">
    <property type="entry name" value="HisA_bact_arch"/>
</dbReference>
<dbReference type="InterPro" id="IPR044524">
    <property type="entry name" value="Isoase_HisA-like"/>
</dbReference>
<dbReference type="InterPro" id="IPR023016">
    <property type="entry name" value="Isoase_HisA-like_bact"/>
</dbReference>
<dbReference type="InterPro" id="IPR011060">
    <property type="entry name" value="RibuloseP-bd_barrel"/>
</dbReference>
<dbReference type="NCBIfam" id="TIGR00007">
    <property type="entry name" value="1-(5-phosphoribosyl)-5-[(5-phosphoribosylamino)methylideneamino]imidazole-4-carboxamide isomerase"/>
    <property type="match status" value="1"/>
</dbReference>
<dbReference type="PANTHER" id="PTHR43090">
    <property type="entry name" value="1-(5-PHOSPHORIBOSYL)-5-[(5-PHOSPHORIBOSYLAMINO)METHYLIDENEAMINO] IMIDAZOLE-4-CARBOXAMIDE ISOMERASE"/>
    <property type="match status" value="1"/>
</dbReference>
<dbReference type="PANTHER" id="PTHR43090:SF2">
    <property type="entry name" value="1-(5-PHOSPHORIBOSYL)-5-[(5-PHOSPHORIBOSYLAMINO)METHYLIDENEAMINO] IMIDAZOLE-4-CARBOXAMIDE ISOMERASE"/>
    <property type="match status" value="1"/>
</dbReference>
<dbReference type="Pfam" id="PF00977">
    <property type="entry name" value="His_biosynth"/>
    <property type="match status" value="1"/>
</dbReference>
<dbReference type="SUPFAM" id="SSF51366">
    <property type="entry name" value="Ribulose-phoshate binding barrel"/>
    <property type="match status" value="1"/>
</dbReference>
<keyword id="KW-0028">Amino-acid biosynthesis</keyword>
<keyword id="KW-0963">Cytoplasm</keyword>
<keyword id="KW-0368">Histidine biosynthesis</keyword>
<keyword id="KW-0413">Isomerase</keyword>
<keyword id="KW-1185">Reference proteome</keyword>